<dbReference type="EMBL" id="AP009384">
    <property type="protein sequence ID" value="BAF89080.1"/>
    <property type="molecule type" value="Genomic_DNA"/>
</dbReference>
<dbReference type="EMBL" id="X63841">
    <property type="protein sequence ID" value="CAA45332.1"/>
    <property type="molecule type" value="Genomic_DNA"/>
</dbReference>
<dbReference type="PIR" id="S18626">
    <property type="entry name" value="S18626"/>
</dbReference>
<dbReference type="RefSeq" id="WP_012171606.1">
    <property type="nucleotide sequence ID" value="NC_009937.1"/>
</dbReference>
<dbReference type="SMR" id="Q04856"/>
<dbReference type="STRING" id="438753.AZC_3082"/>
<dbReference type="KEGG" id="azc:AZC_3082"/>
<dbReference type="eggNOG" id="COG0569">
    <property type="taxonomic scope" value="Bacteria"/>
</dbReference>
<dbReference type="HOGENOM" id="CLU_046525_0_2_5"/>
<dbReference type="Proteomes" id="UP000000270">
    <property type="component" value="Chromosome"/>
</dbReference>
<dbReference type="GO" id="GO:0005886">
    <property type="term" value="C:plasma membrane"/>
    <property type="evidence" value="ECO:0007669"/>
    <property type="project" value="UniProtKB-SubCell"/>
</dbReference>
<dbReference type="GO" id="GO:0015079">
    <property type="term" value="F:potassium ion transmembrane transporter activity"/>
    <property type="evidence" value="ECO:0007669"/>
    <property type="project" value="InterPro"/>
</dbReference>
<dbReference type="Gene3D" id="3.40.50.720">
    <property type="entry name" value="NAD(P)-binding Rossmann-like Domain"/>
    <property type="match status" value="2"/>
</dbReference>
<dbReference type="Gene3D" id="3.30.70.1450">
    <property type="entry name" value="Regulator of K+ conductance, C-terminal domain"/>
    <property type="match status" value="2"/>
</dbReference>
<dbReference type="InterPro" id="IPR006036">
    <property type="entry name" value="K_uptake_TrkA"/>
</dbReference>
<dbReference type="InterPro" id="IPR036291">
    <property type="entry name" value="NAD(P)-bd_dom_sf"/>
</dbReference>
<dbReference type="InterPro" id="IPR006037">
    <property type="entry name" value="RCK_C"/>
</dbReference>
<dbReference type="InterPro" id="IPR036721">
    <property type="entry name" value="RCK_C_sf"/>
</dbReference>
<dbReference type="InterPro" id="IPR003148">
    <property type="entry name" value="RCK_N"/>
</dbReference>
<dbReference type="InterPro" id="IPR050721">
    <property type="entry name" value="Trk_Ktr_HKT_K-transport"/>
</dbReference>
<dbReference type="NCBIfam" id="NF007030">
    <property type="entry name" value="PRK09496.1-1"/>
    <property type="match status" value="1"/>
</dbReference>
<dbReference type="NCBIfam" id="NF007031">
    <property type="entry name" value="PRK09496.1-2"/>
    <property type="match status" value="1"/>
</dbReference>
<dbReference type="NCBIfam" id="NF007032">
    <property type="entry name" value="PRK09496.1-4"/>
    <property type="match status" value="1"/>
</dbReference>
<dbReference type="NCBIfam" id="NF007039">
    <property type="entry name" value="PRK09496.3-2"/>
    <property type="match status" value="1"/>
</dbReference>
<dbReference type="PANTHER" id="PTHR43833">
    <property type="entry name" value="POTASSIUM CHANNEL PROTEIN 2-RELATED-RELATED"/>
    <property type="match status" value="1"/>
</dbReference>
<dbReference type="PANTHER" id="PTHR43833:SF5">
    <property type="entry name" value="TRK SYSTEM POTASSIUM UPTAKE PROTEIN TRKA"/>
    <property type="match status" value="1"/>
</dbReference>
<dbReference type="Pfam" id="PF02080">
    <property type="entry name" value="TrkA_C"/>
    <property type="match status" value="1"/>
</dbReference>
<dbReference type="Pfam" id="PF02254">
    <property type="entry name" value="TrkA_N"/>
    <property type="match status" value="2"/>
</dbReference>
<dbReference type="PRINTS" id="PR00335">
    <property type="entry name" value="KUPTAKETRKA"/>
</dbReference>
<dbReference type="SUPFAM" id="SSF51735">
    <property type="entry name" value="NAD(P)-binding Rossmann-fold domains"/>
    <property type="match status" value="2"/>
</dbReference>
<dbReference type="SUPFAM" id="SSF116726">
    <property type="entry name" value="TrkA C-terminal domain-like"/>
    <property type="match status" value="2"/>
</dbReference>
<dbReference type="PROSITE" id="PS51202">
    <property type="entry name" value="RCK_C"/>
    <property type="match status" value="2"/>
</dbReference>
<dbReference type="PROSITE" id="PS51201">
    <property type="entry name" value="RCK_N"/>
    <property type="match status" value="2"/>
</dbReference>
<organism>
    <name type="scientific">Azorhizobium caulinodans (strain ATCC 43989 / DSM 5975 / JCM 20966 / LMG 6465 / NBRC 14845 / NCIMB 13405 / ORS 571)</name>
    <dbReference type="NCBI Taxonomy" id="438753"/>
    <lineage>
        <taxon>Bacteria</taxon>
        <taxon>Pseudomonadati</taxon>
        <taxon>Pseudomonadota</taxon>
        <taxon>Alphaproteobacteria</taxon>
        <taxon>Hyphomicrobiales</taxon>
        <taxon>Xanthobacteraceae</taxon>
        <taxon>Azorhizobium</taxon>
    </lineage>
</organism>
<keyword id="KW-0997">Cell inner membrane</keyword>
<keyword id="KW-1003">Cell membrane</keyword>
<keyword id="KW-0406">Ion transport</keyword>
<keyword id="KW-0472">Membrane</keyword>
<keyword id="KW-0520">NAD</keyword>
<keyword id="KW-0630">Potassium</keyword>
<keyword id="KW-0633">Potassium transport</keyword>
<keyword id="KW-1185">Reference proteome</keyword>
<keyword id="KW-0677">Repeat</keyword>
<keyword id="KW-0813">Transport</keyword>
<accession>Q04856</accession>
<accession>A8IBK0</accession>
<comment type="function">
    <text evidence="1">Part of a potassium transport system.</text>
</comment>
<comment type="subcellular location">
    <subcellularLocation>
        <location evidence="1">Cell inner membrane</location>
        <topology evidence="1">Peripheral membrane protein</topology>
        <orientation evidence="1">Cytoplasmic side</orientation>
    </subcellularLocation>
</comment>
<comment type="domain">
    <text evidence="1">The RCK N-terminal domain binds NAD and possibly other effectors. This is expected to cause a conformation change that regulates potassium transport (By similarity).</text>
</comment>
<sequence length="458" mass="49334">MKVVICGAGQVGFGIAERLASEQNDVSIVDASPRRIQIATDQLDVRGVVGHGSHPDVLARAGIEQADMLIAVTLHDEVNMVACQVGHSLFNVPTKVARIRAQTYLQPEWRSMLSRDHMPIDVVISPEIEVGEMVLRRLSLPGAVDTVSFGDGSVVIAGVLCGEACPVVDTPLTQLTQLFPDLPATIVAINRNGKVMATRSSDQIQTGDIAYFVAPADQVGRTLSIFGHDEIPAKRIIIGGGGNIGLYVAQELEKRNAAARIKVVESNRERAQAIAEGLSRSVVLHGDSLAREILDEAGVADSDTMIALTNDDRVNILSCLLAKQLGAQRILALVNEQGYAGFAHGLGIDAYVNPRQITVSKVLQHVRRGRIRGVHSLLDGAGEMIEAEALETSPLVGRPLRDIDLLKGMRIGAVVRNGVVMRPSGDTVVRAQDRVVLFALADDIKRVEQLFRVSLEFF</sequence>
<name>TRKA_AZOC5</name>
<feature type="chain" id="PRO_0000148711" description="Trk system potassium uptake protein TrkA">
    <location>
        <begin position="1"/>
        <end position="458"/>
    </location>
</feature>
<feature type="domain" description="RCK N-terminal 1" evidence="3">
    <location>
        <begin position="1"/>
        <end position="124"/>
    </location>
</feature>
<feature type="domain" description="RCK C-terminal 1" evidence="4">
    <location>
        <begin position="144"/>
        <end position="228"/>
    </location>
</feature>
<feature type="domain" description="RCK N-terminal 2" evidence="3">
    <location>
        <begin position="233"/>
        <end position="352"/>
    </location>
</feature>
<feature type="domain" description="RCK C-terminal 2" evidence="4">
    <location>
        <begin position="372"/>
        <end position="453"/>
    </location>
</feature>
<feature type="binding site" description="in other chain" evidence="1">
    <location>
        <begin position="7"/>
        <end position="11"/>
    </location>
    <ligand>
        <name>NAD(+)</name>
        <dbReference type="ChEBI" id="CHEBI:57540"/>
        <label>1</label>
        <note>ligand shared between dimeric partners</note>
    </ligand>
</feature>
<feature type="binding site" description="in other chain" evidence="1">
    <location>
        <position position="30"/>
    </location>
    <ligand>
        <name>NAD(+)</name>
        <dbReference type="ChEBI" id="CHEBI:57540"/>
        <label>1</label>
        <note>ligand shared between dimeric partners</note>
    </ligand>
</feature>
<feature type="binding site" description="in other chain" evidence="1">
    <location>
        <begin position="73"/>
        <end position="74"/>
    </location>
    <ligand>
        <name>NAD(+)</name>
        <dbReference type="ChEBI" id="CHEBI:57540"/>
        <label>1</label>
        <note>ligand shared between dimeric partners</note>
    </ligand>
</feature>
<feature type="binding site" evidence="1">
    <location>
        <position position="98"/>
    </location>
    <ligand>
        <name>NAD(+)</name>
        <dbReference type="ChEBI" id="CHEBI:57540"/>
        <label>1</label>
        <note>ligand shared between dimeric partners</note>
    </ligand>
</feature>
<feature type="binding site" evidence="2">
    <location>
        <begin position="235"/>
        <end position="266"/>
    </location>
    <ligand>
        <name>NAD(+)</name>
        <dbReference type="ChEBI" id="CHEBI:57540"/>
        <label>2</label>
    </ligand>
</feature>
<feature type="sequence conflict" description="In Ref. 2; CAA45332." evidence="5" ref="2">
    <original>KVARIRAQTYLQPEWRS</original>
    <variation>SPASAPRPICSPNGA</variation>
    <location>
        <begin position="95"/>
        <end position="111"/>
    </location>
</feature>
<protein>
    <recommendedName>
        <fullName>Trk system potassium uptake protein TrkA</fullName>
        <shortName>K(+)-uptake protein TrkA</shortName>
    </recommendedName>
</protein>
<reference key="1">
    <citation type="submission" date="2007-04" db="EMBL/GenBank/DDBJ databases">
        <title>Complete genome sequence of the nitrogen-fixing bacterium Azorhizobium caulinodans ORS571.</title>
        <authorList>
            <person name="Lee K.B."/>
            <person name="Backer P.D."/>
            <person name="Aono T."/>
            <person name="Liu C.T."/>
            <person name="Suzuki S."/>
            <person name="Suzuki T."/>
            <person name="Kaneko T."/>
            <person name="Yamada M."/>
            <person name="Tabata S."/>
            <person name="Kupfer D.M."/>
            <person name="Najar F.Z."/>
            <person name="Wiley G.B."/>
            <person name="Roe B."/>
            <person name="Binnewies T."/>
            <person name="Ussery D."/>
            <person name="Vereecke D."/>
            <person name="Gevers D."/>
            <person name="Holsters M."/>
            <person name="Oyaizu H."/>
        </authorList>
    </citation>
    <scope>NUCLEOTIDE SEQUENCE [LARGE SCALE GENOMIC DNA]</scope>
    <source>
        <strain>ATCC 43989 / DSM 5975 / JCM 20966 / LMG 6465 / NBRC 14845 / NCIMB 13405 / ORS 571</strain>
    </source>
</reference>
<reference key="2">
    <citation type="journal article" date="1991" name="Mol. Gen. Genet.">
        <title>Characterization of a novel Azorhizobium caulinodans ORS571 two-component regulatory system, NtrY/NtrX, involved in nitrogen fixation and metabolism.</title>
        <authorList>
            <person name="Pawlowski K."/>
            <person name="Klosse U."/>
            <person name="de Bruijn F.J."/>
        </authorList>
    </citation>
    <scope>NUCLEOTIDE SEQUENCE [GENOMIC DNA] OF 1-111</scope>
</reference>
<proteinExistence type="inferred from homology"/>
<evidence type="ECO:0000250" key="1"/>
<evidence type="ECO:0000255" key="2"/>
<evidence type="ECO:0000255" key="3">
    <source>
        <dbReference type="PROSITE-ProRule" id="PRU00543"/>
    </source>
</evidence>
<evidence type="ECO:0000255" key="4">
    <source>
        <dbReference type="PROSITE-ProRule" id="PRU00544"/>
    </source>
</evidence>
<evidence type="ECO:0000305" key="5"/>
<gene>
    <name type="primary">trkA</name>
    <name type="ordered locus">AZC_3082</name>
</gene>